<comment type="function">
    <text>Hemocyanins are copper-containing oxygen carriers occurring freely dissolved in the hemolymph of many mollusks and arthropods.</text>
</comment>
<comment type="subunit">
    <text>Composed of 3 major subunits (IB, II and III) and 1 minor subunit (IA) which form homohexamers and heterohexamers. May also form larger structures.</text>
</comment>
<comment type="subcellular location">
    <subcellularLocation>
        <location>Secreted</location>
        <location>Extracellular space</location>
    </subcellularLocation>
</comment>
<comment type="tissue specificity">
    <text>Hemolymph.</text>
</comment>
<comment type="similarity">
    <text evidence="2">Belongs to the tyrosinase family. Hemocyanin subfamily.</text>
</comment>
<feature type="chain" id="PRO_0000204295" description="Hemocyanin subunit Ib">
    <location>
        <begin position="1"/>
        <end position="20" status="greater than"/>
    </location>
</feature>
<feature type="region of interest" description="Disordered" evidence="1">
    <location>
        <begin position="1"/>
        <end position="20"/>
    </location>
</feature>
<feature type="non-terminal residue" evidence="2">
    <location>
        <position position="20"/>
    </location>
</feature>
<dbReference type="PIR" id="S00493">
    <property type="entry name" value="S00493"/>
</dbReference>
<dbReference type="GO" id="GO:0005576">
    <property type="term" value="C:extracellular region"/>
    <property type="evidence" value="ECO:0007669"/>
    <property type="project" value="UniProtKB-SubCell"/>
</dbReference>
<dbReference type="GO" id="GO:0005344">
    <property type="term" value="F:oxygen carrier activity"/>
    <property type="evidence" value="ECO:0007669"/>
    <property type="project" value="UniProtKB-KW"/>
</dbReference>
<organism evidence="2">
    <name type="scientific">Panulirus japonicus</name>
    <name type="common">Japanese spiny lobster</name>
    <name type="synonym">Palinurus japonicus</name>
    <dbReference type="NCBI Taxonomy" id="6736"/>
    <lineage>
        <taxon>Eukaryota</taxon>
        <taxon>Metazoa</taxon>
        <taxon>Ecdysozoa</taxon>
        <taxon>Arthropoda</taxon>
        <taxon>Crustacea</taxon>
        <taxon>Multicrustacea</taxon>
        <taxon>Malacostraca</taxon>
        <taxon>Eumalacostraca</taxon>
        <taxon>Eucarida</taxon>
        <taxon>Decapoda</taxon>
        <taxon>Pleocyemata</taxon>
        <taxon>Achelata</taxon>
        <taxon>Palinuroidea</taxon>
        <taxon>Palinuridae</taxon>
        <taxon>Panulirus</taxon>
    </lineage>
</organism>
<name>HCYIB_PANJA</name>
<proteinExistence type="evidence at protein level"/>
<accession>P82311</accession>
<protein>
    <recommendedName>
        <fullName>Hemocyanin subunit Ib</fullName>
    </recommendedName>
</protein>
<keyword id="KW-0186">Copper</keyword>
<keyword id="KW-0903">Direct protein sequencing</keyword>
<keyword id="KW-0561">Oxygen transport</keyword>
<keyword id="KW-0964">Secreted</keyword>
<keyword id="KW-0813">Transport</keyword>
<evidence type="ECO:0000256" key="1">
    <source>
        <dbReference type="SAM" id="MobiDB-lite"/>
    </source>
</evidence>
<evidence type="ECO:0000305" key="2"/>
<reference evidence="2" key="1">
    <citation type="journal article" date="1988" name="Eur. J. Biochem.">
        <title>Subunits of Panulirus japonicus hemocyanin. 1. Isolation and properties.</title>
        <authorList>
            <person name="Makino N."/>
            <person name="Kimura S."/>
        </authorList>
    </citation>
    <scope>PROTEIN SEQUENCE</scope>
    <source>
        <tissue>Serum</tissue>
    </source>
</reference>
<sequence>DSVGSTTAHKQQNINHLLDK</sequence>